<organism>
    <name type="scientific">Haemophilus influenzae (strain ATCC 51907 / DSM 11121 / KW20 / Rd)</name>
    <dbReference type="NCBI Taxonomy" id="71421"/>
    <lineage>
        <taxon>Bacteria</taxon>
        <taxon>Pseudomonadati</taxon>
        <taxon>Pseudomonadota</taxon>
        <taxon>Gammaproteobacteria</taxon>
        <taxon>Pasteurellales</taxon>
        <taxon>Pasteurellaceae</taxon>
        <taxon>Haemophilus</taxon>
    </lineage>
</organism>
<name>MOG_HAEIN</name>
<keyword id="KW-0067">ATP-binding</keyword>
<keyword id="KW-0501">Molybdenum cofactor biosynthesis</keyword>
<keyword id="KW-0547">Nucleotide-binding</keyword>
<keyword id="KW-1185">Reference proteome</keyword>
<keyword id="KW-0808">Transferase</keyword>
<comment type="function">
    <text evidence="1">Catalyzes the adenylation of molybdopterin as part of the biosynthesis of the molybdenum-cofactor.</text>
</comment>
<comment type="catalytic activity">
    <reaction>
        <text>molybdopterin + ATP + H(+) = adenylyl-molybdopterin + diphosphate</text>
        <dbReference type="Rhea" id="RHEA:31331"/>
        <dbReference type="ChEBI" id="CHEBI:15378"/>
        <dbReference type="ChEBI" id="CHEBI:30616"/>
        <dbReference type="ChEBI" id="CHEBI:33019"/>
        <dbReference type="ChEBI" id="CHEBI:58698"/>
        <dbReference type="ChEBI" id="CHEBI:62727"/>
        <dbReference type="EC" id="2.7.7.75"/>
    </reaction>
</comment>
<comment type="pathway">
    <text>Cofactor biosynthesis; molybdopterin biosynthesis.</text>
</comment>
<comment type="similarity">
    <text evidence="2">Belongs to the MoaB/Mog family.</text>
</comment>
<dbReference type="EC" id="2.7.7.75"/>
<dbReference type="EMBL" id="L42023">
    <property type="protein sequence ID" value="AAC21998.1"/>
    <property type="molecule type" value="Genomic_DNA"/>
</dbReference>
<dbReference type="PIR" id="D64148">
    <property type="entry name" value="D64148"/>
</dbReference>
<dbReference type="RefSeq" id="NP_438500.1">
    <property type="nucleotide sequence ID" value="NC_000907.1"/>
</dbReference>
<dbReference type="SMR" id="P44645"/>
<dbReference type="STRING" id="71421.HI_0336"/>
<dbReference type="EnsemblBacteria" id="AAC21998">
    <property type="protein sequence ID" value="AAC21998"/>
    <property type="gene ID" value="HI_0336"/>
</dbReference>
<dbReference type="KEGG" id="hin:HI_0336"/>
<dbReference type="PATRIC" id="fig|71421.8.peg.353"/>
<dbReference type="eggNOG" id="COG0521">
    <property type="taxonomic scope" value="Bacteria"/>
</dbReference>
<dbReference type="HOGENOM" id="CLU_077358_1_0_6"/>
<dbReference type="OrthoDB" id="9784492at2"/>
<dbReference type="PhylomeDB" id="P44645"/>
<dbReference type="BioCyc" id="HINF71421:G1GJ1-352-MONOMER"/>
<dbReference type="UniPathway" id="UPA00344"/>
<dbReference type="Proteomes" id="UP000000579">
    <property type="component" value="Chromosome"/>
</dbReference>
<dbReference type="GO" id="GO:0005829">
    <property type="term" value="C:cytosol"/>
    <property type="evidence" value="ECO:0000318"/>
    <property type="project" value="GO_Central"/>
</dbReference>
<dbReference type="GO" id="GO:0005524">
    <property type="term" value="F:ATP binding"/>
    <property type="evidence" value="ECO:0007669"/>
    <property type="project" value="UniProtKB-KW"/>
</dbReference>
<dbReference type="GO" id="GO:0061598">
    <property type="term" value="F:molybdopterin adenylyltransferase activity"/>
    <property type="evidence" value="ECO:0000318"/>
    <property type="project" value="GO_Central"/>
</dbReference>
<dbReference type="GO" id="GO:0006777">
    <property type="term" value="P:Mo-molybdopterin cofactor biosynthetic process"/>
    <property type="evidence" value="ECO:0007669"/>
    <property type="project" value="UniProtKB-KW"/>
</dbReference>
<dbReference type="GO" id="GO:0032324">
    <property type="term" value="P:molybdopterin cofactor biosynthetic process"/>
    <property type="evidence" value="ECO:0000318"/>
    <property type="project" value="GO_Central"/>
</dbReference>
<dbReference type="CDD" id="cd00886">
    <property type="entry name" value="MogA_MoaB"/>
    <property type="match status" value="1"/>
</dbReference>
<dbReference type="FunFam" id="3.40.980.10:FF:000005">
    <property type="entry name" value="Molybdopterin biosynthesis mog protein"/>
    <property type="match status" value="1"/>
</dbReference>
<dbReference type="Gene3D" id="3.40.980.10">
    <property type="entry name" value="MoaB/Mog-like domain"/>
    <property type="match status" value="1"/>
</dbReference>
<dbReference type="InterPro" id="IPR036425">
    <property type="entry name" value="MoaB/Mog-like_dom_sf"/>
</dbReference>
<dbReference type="InterPro" id="IPR001453">
    <property type="entry name" value="MoaB/Mog_dom"/>
</dbReference>
<dbReference type="InterPro" id="IPR008284">
    <property type="entry name" value="MoCF_biosynth_CS"/>
</dbReference>
<dbReference type="InterPro" id="IPR051920">
    <property type="entry name" value="MPT_Adenylyltrnsfr/MoaC-Rel"/>
</dbReference>
<dbReference type="NCBIfam" id="TIGR00177">
    <property type="entry name" value="molyb_syn"/>
    <property type="match status" value="1"/>
</dbReference>
<dbReference type="NCBIfam" id="NF006932">
    <property type="entry name" value="PRK09417.1"/>
    <property type="match status" value="1"/>
</dbReference>
<dbReference type="PANTHER" id="PTHR43764">
    <property type="entry name" value="MOLYBDENUM COFACTOR BIOSYNTHESIS"/>
    <property type="match status" value="1"/>
</dbReference>
<dbReference type="PANTHER" id="PTHR43764:SF1">
    <property type="entry name" value="MOLYBDOPTERIN MOLYBDOTRANSFERASE"/>
    <property type="match status" value="1"/>
</dbReference>
<dbReference type="Pfam" id="PF00994">
    <property type="entry name" value="MoCF_biosynth"/>
    <property type="match status" value="1"/>
</dbReference>
<dbReference type="SMART" id="SM00852">
    <property type="entry name" value="MoCF_biosynth"/>
    <property type="match status" value="1"/>
</dbReference>
<dbReference type="SUPFAM" id="SSF53218">
    <property type="entry name" value="Molybdenum cofactor biosynthesis proteins"/>
    <property type="match status" value="1"/>
</dbReference>
<dbReference type="PROSITE" id="PS01078">
    <property type="entry name" value="MOCF_BIOSYNTHESIS_1"/>
    <property type="match status" value="1"/>
</dbReference>
<feature type="chain" id="PRO_0000170984" description="Molybdopterin adenylyltransferase">
    <location>
        <begin position="1"/>
        <end position="197"/>
    </location>
</feature>
<proteinExistence type="evidence at protein level"/>
<accession>P44645</accession>
<reference key="1">
    <citation type="journal article" date="1995" name="Science">
        <title>Whole-genome random sequencing and assembly of Haemophilus influenzae Rd.</title>
        <authorList>
            <person name="Fleischmann R.D."/>
            <person name="Adams M.D."/>
            <person name="White O."/>
            <person name="Clayton R.A."/>
            <person name="Kirkness E.F."/>
            <person name="Kerlavage A.R."/>
            <person name="Bult C.J."/>
            <person name="Tomb J.-F."/>
            <person name="Dougherty B.A."/>
            <person name="Merrick J.M."/>
            <person name="McKenney K."/>
            <person name="Sutton G.G."/>
            <person name="FitzHugh W."/>
            <person name="Fields C.A."/>
            <person name="Gocayne J.D."/>
            <person name="Scott J.D."/>
            <person name="Shirley R."/>
            <person name="Liu L.-I."/>
            <person name="Glodek A."/>
            <person name="Kelley J.M."/>
            <person name="Weidman J.F."/>
            <person name="Phillips C.A."/>
            <person name="Spriggs T."/>
            <person name="Hedblom E."/>
            <person name="Cotton M.D."/>
            <person name="Utterback T.R."/>
            <person name="Hanna M.C."/>
            <person name="Nguyen D.T."/>
            <person name="Saudek D.M."/>
            <person name="Brandon R.C."/>
            <person name="Fine L.D."/>
            <person name="Fritchman J.L."/>
            <person name="Fuhrmann J.L."/>
            <person name="Geoghagen N.S.M."/>
            <person name="Gnehm C.L."/>
            <person name="McDonald L.A."/>
            <person name="Small K.V."/>
            <person name="Fraser C.M."/>
            <person name="Smith H.O."/>
            <person name="Venter J.C."/>
        </authorList>
    </citation>
    <scope>NUCLEOTIDE SEQUENCE [LARGE SCALE GENOMIC DNA]</scope>
    <source>
        <strain>ATCC 51907 / DSM 11121 / KW20 / Rd</strain>
    </source>
</reference>
<reference key="2">
    <citation type="journal article" date="2000" name="Electrophoresis">
        <title>Two-dimensional map of the proteome of Haemophilus influenzae.</title>
        <authorList>
            <person name="Langen H."/>
            <person name="Takacs B."/>
            <person name="Evers S."/>
            <person name="Berndt P."/>
            <person name="Lahm H.W."/>
            <person name="Wipf B."/>
            <person name="Gray C."/>
            <person name="Fountoulakis M."/>
        </authorList>
    </citation>
    <scope>IDENTIFICATION BY MASS SPECTROMETRY</scope>
    <source>
        <strain>ATCC 51907 / DSM 11121 / KW20 / Rd</strain>
    </source>
</reference>
<sequence length="197" mass="21691">MTALLKIGLVSVSDRASAGVYQDQGIPELQAWLEQALVDPFHLETRLIPDEQPVIEQTLKELVDEQGCHLVLTTGGTGPAKRDVTPDATLAVADREMPGFGEQMRQVSLHFVPTAILSRQVGVIRKESLILNLPGQPKAIKETLEGVKDKEGNVLVKGIFSAVPYCLQLINGLYIDTKPEIIESFRPKSARRENLEK</sequence>
<evidence type="ECO:0000250" key="1"/>
<evidence type="ECO:0000305" key="2"/>
<protein>
    <recommendedName>
        <fullName>Molybdopterin adenylyltransferase</fullName>
        <shortName>MPT adenylyltransferase</shortName>
        <ecNumber>2.7.7.75</ecNumber>
    </recommendedName>
</protein>
<gene>
    <name type="primary">mog</name>
    <name type="synonym">mogA</name>
    <name type="ordered locus">HI_0336</name>
</gene>